<sequence length="1259" mass="142189">MDASEEPLPPVIYTMENKPIVTCAGDQNLFTSVYPTLSQQLPREPMEWRRSYGRAPKMIHLESNFVQFKEELLPKEGNKALLTFPFLHIYWTECCDTEVYKATVKDDLTKWQNVLKAHSSVDWLIVIVENDAKKKNKTNILPRTSIVDKIRNDFCNKQSDRCVVLSDPLKDSSRTQESWNAFLTKLRTLLLMSFTKNLGKFEDDMRTLREKRTEPGWSFCEYFMVQEELAFVFEMLQQFEDALVQYDELDALFSQYVVNFGAGDGANWLTFFCQPVKSWNGLILRKPIDMEKRESIQRREATLLDLRSYLFSRQCTLLLFLQRPWEVAQRALELLHNCVQELKLLEVSVPPGALDCWVFLSCLEVLQRIEGCCDRAQIDSNIAHTVGLWSYATEKLKSLGYLCGLVSEKGPNSEDLNRTVDLLAGLGAERPETANTAQSPYKKLKEALSSVEAFEKHYLDLSHATIEMYTSIGRIRSAKFVGKDLAEFYMRKKAPQKAEIYLQGALKNYLAEGWALPITHTRKQLAECQKHLGQIENYLQTSSLLASDHHLTEEERKHFCQEILDFASQPSDSPGHKIVLPMHSFAQLRDLHFDPSNAVVHVGGVLCVEITMYSQMPVPVHVEQIVVNVHFSIEKNSYRKTAEWLTKHKTSNGIINFPPETAPFPVSQNSLPALELYEMFERSPSDNSLNTTGIICRNVHMLLRRQESSSSLEMPSGVALEEGAHVLRCSHVTLEPGANQITFRTQAKEPGTYTLRQLCASVGSVWFVLPHIYPIVQYDVYSQEPQLHVEPLADSLLAGIPQRVKFTVTTGHYTIKNGDSLQLSNAEAMLILCQAESRAVVYSNTREQSSEAALRIQSSDKVTSISLPVAPAYHVIEFELEVLSLPSAPALGGESDMLGMAEPHRKHKDKQRTGRCMVTTDHKVSIDCPWSIYSTVIALTFSVPFRTTHSLLSSGTRKYVQVCVQNLSELDFQLSDSYLVDTGDSTDLQLVPLNTQSQQPIYSKQSVFFVWELKWTEEPPPSLHCRFSVGFSPASEEQLSISLKPYTYEFKVENFFTLYNVKAEIFPPSGMEYCRTGSLCSLEVLITRLSDLLEVDKDEALTESDEHFSTKLMYEVVDNSSNWAVCGKSCGVISMPVAARATHRVHMEVMPLFAGYLPLPDVRLFKYLPHHSAHSSQLDADSWIENDSLSVDKHGDDQPDSSSLKSRGSVHSACSSEHKGLPMPRLQALPAGQVFNSSSGTQVLVIPSQDDHVLEVSVT</sequence>
<reference key="1">
    <citation type="journal article" date="1995" name="Hum. Mol. Genet.">
        <title>Isolation and characterization of a candidate gene for progressive myoclonus epilepsy on 21q22.3.</title>
        <authorList>
            <person name="Yamakawa K."/>
            <person name="Mitchell S."/>
            <person name="Hubert R."/>
            <person name="Chen X.-N."/>
            <person name="Colbern S."/>
            <person name="Huo Y.-K."/>
            <person name="Gadomski C."/>
            <person name="Kim U.-J."/>
            <person name="Korenberg J.R."/>
        </authorList>
    </citation>
    <scope>NUCLEOTIDE SEQUENCE [MRNA] (ISOFORM 1)</scope>
    <source>
        <tissue>Brain</tissue>
    </source>
</reference>
<reference key="2">
    <citation type="journal article" date="1997" name="Biochem. Biophys. Res. Commun.">
        <title>Genomic organization and complete nucleotide sequence of the TMEM1 gene on human chromosome 21q22.3.</title>
        <authorList>
            <person name="Nagamine K."/>
            <person name="Kudoh J."/>
            <person name="Kawasaki K."/>
            <person name="Minoshima S."/>
            <person name="Asakawa S."/>
            <person name="Ito F."/>
            <person name="Shimizu N."/>
        </authorList>
    </citation>
    <scope>NUCLEOTIDE SEQUENCE [GENOMIC DNA]</scope>
</reference>
<reference key="3">
    <citation type="journal article" date="1997" name="Gene">
        <title>Genomic structure of the human GT334 (EHOC-1) gene mapping to 21q22.3.</title>
        <authorList>
            <person name="Lafreniere R.G."/>
            <person name="Kibar Z."/>
            <person name="Rochefort D.L."/>
            <person name="Han F.-Y."/>
            <person name="Fon E.A."/>
            <person name="Dube M.-P."/>
            <person name="Kang X."/>
            <person name="Baird S."/>
            <person name="Korneluk R.G."/>
            <person name="Rommens J.M."/>
            <person name="Rouleau G.A."/>
        </authorList>
    </citation>
    <scope>NUCLEOTIDE SEQUENCE [GENOMIC DNA / MRNA] (ISOFORM 1)</scope>
    <scope>VARIANTS GLU-257; MET-633 AND MET-726</scope>
</reference>
<reference key="4">
    <citation type="journal article" date="2000" name="Nature">
        <title>The DNA sequence of human chromosome 21.</title>
        <authorList>
            <person name="Hattori M."/>
            <person name="Fujiyama A."/>
            <person name="Taylor T.D."/>
            <person name="Watanabe H."/>
            <person name="Yada T."/>
            <person name="Park H.-S."/>
            <person name="Toyoda A."/>
            <person name="Ishii K."/>
            <person name="Totoki Y."/>
            <person name="Choi D.-K."/>
            <person name="Groner Y."/>
            <person name="Soeda E."/>
            <person name="Ohki M."/>
            <person name="Takagi T."/>
            <person name="Sakaki Y."/>
            <person name="Taudien S."/>
            <person name="Blechschmidt K."/>
            <person name="Polley A."/>
            <person name="Menzel U."/>
            <person name="Delabar J."/>
            <person name="Kumpf K."/>
            <person name="Lehmann R."/>
            <person name="Patterson D."/>
            <person name="Reichwald K."/>
            <person name="Rump A."/>
            <person name="Schillhabel M."/>
            <person name="Schudy A."/>
            <person name="Zimmermann W."/>
            <person name="Rosenthal A."/>
            <person name="Kudoh J."/>
            <person name="Shibuya K."/>
            <person name="Kawasaki K."/>
            <person name="Asakawa S."/>
            <person name="Shintani A."/>
            <person name="Sasaki T."/>
            <person name="Nagamine K."/>
            <person name="Mitsuyama S."/>
            <person name="Antonarakis S.E."/>
            <person name="Minoshima S."/>
            <person name="Shimizu N."/>
            <person name="Nordsiek G."/>
            <person name="Hornischer K."/>
            <person name="Brandt P."/>
            <person name="Scharfe M."/>
            <person name="Schoen O."/>
            <person name="Desario A."/>
            <person name="Reichelt J."/>
            <person name="Kauer G."/>
            <person name="Bloecker H."/>
            <person name="Ramser J."/>
            <person name="Beck A."/>
            <person name="Klages S."/>
            <person name="Hennig S."/>
            <person name="Riesselmann L."/>
            <person name="Dagand E."/>
            <person name="Wehrmeyer S."/>
            <person name="Borzym K."/>
            <person name="Gardiner K."/>
            <person name="Nizetic D."/>
            <person name="Francis F."/>
            <person name="Lehrach H."/>
            <person name="Reinhardt R."/>
            <person name="Yaspo M.-L."/>
        </authorList>
    </citation>
    <scope>NUCLEOTIDE SEQUENCE [LARGE SCALE GENOMIC DNA]</scope>
</reference>
<reference key="5">
    <citation type="journal article" date="2004" name="Genome Res.">
        <title>The status, quality, and expansion of the NIH full-length cDNA project: the Mammalian Gene Collection (MGC).</title>
        <authorList>
            <consortium name="The MGC Project Team"/>
        </authorList>
    </citation>
    <scope>NUCLEOTIDE SEQUENCE [LARGE SCALE MRNA] (ISOFORMS 1 AND 2)</scope>
    <source>
        <tissue>Lymph</tissue>
    </source>
</reference>
<reference key="6">
    <citation type="journal article" date="2002" name="Nature">
        <title>Functional organization of the yeast proteome by systematic analysis of protein complexes.</title>
        <authorList>
            <person name="Gavin A.-C."/>
            <person name="Boesche M."/>
            <person name="Krause R."/>
            <person name="Grandi P."/>
            <person name="Marzioch M."/>
            <person name="Bauer A."/>
            <person name="Schultz J."/>
            <person name="Rick J.M."/>
            <person name="Michon A.-M."/>
            <person name="Cruciat C.-M."/>
            <person name="Remor M."/>
            <person name="Hoefert C."/>
            <person name="Schelder M."/>
            <person name="Brajenovic M."/>
            <person name="Ruffner H."/>
            <person name="Merino A."/>
            <person name="Klein K."/>
            <person name="Hudak M."/>
            <person name="Dickson D."/>
            <person name="Rudi T."/>
            <person name="Gnau V."/>
            <person name="Bauch A."/>
            <person name="Bastuck S."/>
            <person name="Huhse B."/>
            <person name="Leutwein C."/>
            <person name="Heurtier M.-A."/>
            <person name="Copley R.R."/>
            <person name="Edelmann A."/>
            <person name="Querfurth E."/>
            <person name="Rybin V."/>
            <person name="Drewes G."/>
            <person name="Raida M."/>
            <person name="Bouwmeester T."/>
            <person name="Bork P."/>
            <person name="Seraphin B."/>
            <person name="Kuster B."/>
            <person name="Neubauer G."/>
            <person name="Superti-Furga G."/>
        </authorList>
    </citation>
    <scope>IDENTIFICATION IN TRAPP COMPLEX</scope>
    <scope>FUNCTION</scope>
</reference>
<reference key="7">
    <citation type="journal article" date="2010" name="Sci. Signal.">
        <title>Quantitative phosphoproteomics reveals widespread full phosphorylation site occupancy during mitosis.</title>
        <authorList>
            <person name="Olsen J.V."/>
            <person name="Vermeulen M."/>
            <person name="Santamaria A."/>
            <person name="Kumar C."/>
            <person name="Miller M.L."/>
            <person name="Jensen L.J."/>
            <person name="Gnad F."/>
            <person name="Cox J."/>
            <person name="Jensen T.S."/>
            <person name="Nigg E.A."/>
            <person name="Brunak S."/>
            <person name="Mann M."/>
        </authorList>
    </citation>
    <scope>IDENTIFICATION BY MASS SPECTROMETRY [LARGE SCALE ANALYSIS]</scope>
    <source>
        <tissue>Cervix carcinoma</tissue>
    </source>
</reference>
<reference key="8">
    <citation type="journal article" date="2011" name="Mol. Biol. Cell">
        <title>C4orf41 and TTC-15 are mammalian TRAPP components with a role at an early stage in ER-to-Golgi trafficking.</title>
        <authorList>
            <person name="Scrivens P.J."/>
            <person name="Noueihed B."/>
            <person name="Shahrzad N."/>
            <person name="Hul S."/>
            <person name="Brunet S."/>
            <person name="Sacher M."/>
        </authorList>
    </citation>
    <scope>IDENTIFICATION IN TRAPP COMPLEX</scope>
</reference>
<reference key="9">
    <citation type="journal article" date="2013" name="J. Proteome Res.">
        <title>Toward a comprehensive characterization of a human cancer cell phosphoproteome.</title>
        <authorList>
            <person name="Zhou H."/>
            <person name="Di Palma S."/>
            <person name="Preisinger C."/>
            <person name="Peng M."/>
            <person name="Polat A.N."/>
            <person name="Heck A.J."/>
            <person name="Mohammed S."/>
        </authorList>
    </citation>
    <scope>PHOSPHORYLATION [LARGE SCALE ANALYSIS] AT SER-708</scope>
    <scope>IDENTIFICATION BY MASS SPECTROMETRY [LARGE SCALE ANALYSIS]</scope>
    <source>
        <tissue>Cervix carcinoma</tissue>
        <tissue>Erythroleukemia</tissue>
    </source>
</reference>
<reference key="10">
    <citation type="journal article" date="2014" name="J. Proteomics">
        <title>An enzyme assisted RP-RPLC approach for in-depth analysis of human liver phosphoproteome.</title>
        <authorList>
            <person name="Bian Y."/>
            <person name="Song C."/>
            <person name="Cheng K."/>
            <person name="Dong M."/>
            <person name="Wang F."/>
            <person name="Huang J."/>
            <person name="Sun D."/>
            <person name="Wang L."/>
            <person name="Ye M."/>
            <person name="Zou H."/>
        </authorList>
    </citation>
    <scope>IDENTIFICATION BY MASS SPECTROMETRY [LARGE SCALE ANALYSIS]</scope>
    <source>
        <tissue>Liver</tissue>
    </source>
</reference>
<reference key="11">
    <citation type="journal article" date="2018" name="Hum. Genet.">
        <title>Novel candidate genes and variants underlying autosomal recessive neurodevelopmental disorders with intellectual disability.</title>
        <authorList>
            <person name="Santos-Cortez R.L.P."/>
            <person name="Khan V."/>
            <person name="Khan F.S."/>
            <person name="Mughal Z.U."/>
            <person name="Chakchouk I."/>
            <person name="Lee K."/>
            <person name="Rasheed M."/>
            <person name="Hamza R."/>
            <person name="Acharya A."/>
            <person name="Ullah E."/>
            <person name="Saqib M.A.N."/>
            <person name="Abbe I."/>
            <person name="Ali G."/>
            <person name="Hassan M.J."/>
            <person name="Khan S."/>
            <person name="Azeem Z."/>
            <person name="Ullah I."/>
            <person name="Bamshad M.J."/>
            <person name="Nickerson D.A."/>
            <person name="Schrauwen I."/>
            <person name="Ahmad W."/>
            <person name="Ansar M."/>
            <person name="Leal S.M."/>
        </authorList>
    </citation>
    <scope>INVOLVEMENT IN NEDMISS</scope>
    <scope>VARIANT NEDMISS LEU-929</scope>
</reference>
<reference key="12">
    <citation type="journal article" date="2019" name="J. Biol. Chem.">
        <title>The C7orf43/TRAPPC14 component links the TRAPPII complex to Rabin8 for preciliary vesicle tethering at the mother centriole during ciliogenesis.</title>
        <authorList>
            <person name="Cuenca A."/>
            <person name="Insinna C."/>
            <person name="Zhao H."/>
            <person name="John P."/>
            <person name="Weiss M.A."/>
            <person name="Lu Q."/>
            <person name="Walia V."/>
            <person name="Specht S."/>
            <person name="Manivannan S."/>
            <person name="Stauffer J."/>
            <person name="Peden A.A."/>
            <person name="Westlake C.J."/>
        </authorList>
    </citation>
    <scope>IDENTIFICATION IN THE TRAPP II COMPLEX</scope>
    <scope>FUNCTION</scope>
    <scope>INTERACTION WITH TRAPPC14</scope>
</reference>
<reference key="13">
    <citation type="journal article" date="2022" name="PLoS Genet.">
        <title>Biallelic variants in TRAPPC10 cause a microcephalic TRAPPopathy disorder in humans and mice.</title>
        <authorList>
            <person name="Rawlins L.E."/>
            <person name="Almousa H."/>
            <person name="Khan S."/>
            <person name="Collins S.C."/>
            <person name="Milev M.P."/>
            <person name="Leslie J."/>
            <person name="Saint-Dic D."/>
            <person name="Khan V."/>
            <person name="Hincapie A.M."/>
            <person name="Day J.O."/>
            <person name="McGavin L."/>
            <person name="Rowley C."/>
            <person name="Harlalka G.V."/>
            <person name="Vancollie V.E."/>
            <person name="Ahmad W."/>
            <person name="Lelliott C.J."/>
            <person name="Gul A."/>
            <person name="Yalcin B."/>
            <person name="Crosby A.H."/>
            <person name="Sacher M."/>
            <person name="Baple E.L."/>
        </authorList>
    </citation>
    <scope>CHARACTERIZATION VARIANT NEDMISS LEU-929</scope>
    <scope>FUNCTION</scope>
</reference>
<keyword id="KW-0025">Alternative splicing</keyword>
<keyword id="KW-1268">Autism spectrum disorder</keyword>
<keyword id="KW-0225">Disease variant</keyword>
<keyword id="KW-0242">Dwarfism</keyword>
<keyword id="KW-0887">Epilepsy</keyword>
<keyword id="KW-0931">ER-Golgi transport</keyword>
<keyword id="KW-0333">Golgi apparatus</keyword>
<keyword id="KW-0991">Intellectual disability</keyword>
<keyword id="KW-0597">Phosphoprotein</keyword>
<keyword id="KW-1267">Proteomics identification</keyword>
<keyword id="KW-1185">Reference proteome</keyword>
<keyword id="KW-0813">Transport</keyword>
<gene>
    <name type="primary">TRAPPC10</name>
    <name type="synonym">EHOC1</name>
    <name type="synonym">TMEM1</name>
</gene>
<comment type="function">
    <text evidence="3 6 7">Specific subunit of the TRAPP (transport protein particle) II complex, a highly conserved vesicle tethering complex that functions in late Golgi trafficking as a membrane tether.</text>
</comment>
<comment type="subunit">
    <text evidence="3 4 6">Specific component of the multisubunit TRAPP II complex, which includes at least TRAPPC1, TRAPPC2, TRAPPC3, TRAPPC4, TRAPPC5, TRAPPC6A/B, TRAPPC9, TRAPPC10 and TRAPPC14. TRAPPC9, TRAPPC10 and TRAPPC14 are specific subunits of the TRAPP II complex (PubMed:11805826, PubMed:21525244, PubMed:31467083). Interacts with TRAPPC14 (PubMed:31467083).</text>
</comment>
<comment type="interaction">
    <interactant intactId="EBI-6160572">
        <id>P48553</id>
    </interactant>
    <interactant intactId="EBI-747844">
        <id>Q96QF0</id>
        <label>RAB3IP</label>
    </interactant>
    <organismsDiffer>false</organismsDiffer>
    <experiments>7</experiments>
</comment>
<comment type="subcellular location">
    <subcellularLocation>
        <location evidence="1">Golgi apparatus</location>
        <location evidence="1">cis-Golgi network</location>
    </subcellularLocation>
</comment>
<comment type="alternative products">
    <event type="alternative splicing"/>
    <isoform>
        <id>P48553-1</id>
        <name>1</name>
        <sequence type="displayed"/>
    </isoform>
    <isoform>
        <id>P48553-2</id>
        <name>2</name>
        <sequence type="described" ref="VSP_056589 VSP_056590"/>
    </isoform>
</comment>
<comment type="tissue specificity">
    <text>Expressed in all tissues examined.</text>
</comment>
<comment type="disease" evidence="5 7">
    <disease id="DI-06499">
        <name>Neurodevelopmental disorder with microcephaly, short stature, and speech delay</name>
        <acronym>NEDMISS</acronym>
        <description>An autosomal recessive disorder characterized by global developmental delay, short stature, severely impaired intellectual development, microcephaly, poor or absent speech, and behavioral abnormalities including autistic features and aggressive behavior.</description>
        <dbReference type="MIM" id="620027"/>
    </disease>
    <text>The disease is caused by variants affecting the gene represented in this entry.</text>
</comment>
<comment type="similarity">
    <text evidence="10">Belongs to the TRAPPC10 family.</text>
</comment>
<comment type="sequence caution" evidence="10">
    <conflict type="frameshift">
        <sequence resource="EMBL-CDS" id="AAC50134"/>
    </conflict>
</comment>
<protein>
    <recommendedName>
        <fullName>Trafficking protein particle complex subunit 10</fullName>
    </recommendedName>
    <alternativeName>
        <fullName>Epilepsy holoprosencephaly candidate 1 protein</fullName>
        <shortName>EHOC-1</shortName>
    </alternativeName>
    <alternativeName>
        <fullName>Protein GT334</fullName>
    </alternativeName>
    <alternativeName>
        <fullName>Trafficking protein particle complex subunit TMEM1</fullName>
    </alternativeName>
    <alternativeName>
        <fullName>Transport protein particle subunit TMEM1</fullName>
        <shortName>TRAPP subunit TMEM1</shortName>
    </alternativeName>
</protein>
<feature type="chain" id="PRO_0000193509" description="Trafficking protein particle complex subunit 10">
    <location>
        <begin position="1"/>
        <end position="1259"/>
    </location>
</feature>
<feature type="region of interest" description="Disordered" evidence="2">
    <location>
        <begin position="1189"/>
        <end position="1222"/>
    </location>
</feature>
<feature type="modified residue" description="Phosphoserine" evidence="11">
    <location>
        <position position="708"/>
    </location>
</feature>
<feature type="splice variant" id="VSP_056589" description="In isoform 2." evidence="9">
    <original>DGANWLTFFCQPV</original>
    <variation>GIKCPFHNSVACW</variation>
    <location>
        <begin position="264"/>
        <end position="276"/>
    </location>
</feature>
<feature type="splice variant" id="VSP_056590" description="In isoform 2." evidence="9">
    <location>
        <begin position="277"/>
        <end position="1259"/>
    </location>
</feature>
<feature type="sequence variant" id="VAR_009514" evidence="8">
    <original>V</original>
    <variation>E</variation>
    <location>
        <position position="257"/>
    </location>
</feature>
<feature type="sequence variant" id="VAR_009515" description="In dbSNP:rs915877." evidence="8">
    <original>I</original>
    <variation>M</variation>
    <location>
        <position position="633"/>
    </location>
</feature>
<feature type="sequence variant" id="VAR_009516" description="In dbSNP:rs2071152." evidence="8">
    <original>V</original>
    <variation>M</variation>
    <location>
        <position position="726"/>
    </location>
</feature>
<feature type="sequence variant" id="VAR_084045" description="In NEDMISS; unable to rescue intra-Golgi vesicle-mediated transport defects in gene-null cells; dbSNP:rs2038452898." evidence="5 7">
    <original>P</original>
    <variation>L</variation>
    <location>
        <position position="929"/>
    </location>
</feature>
<feature type="sequence conflict" description="In Ref. 3; AAB58468." evidence="10" ref="3">
    <original>V</original>
    <variation>A</variation>
    <location>
        <position position="114"/>
    </location>
</feature>
<feature type="sequence conflict" description="In Ref. 3; AAB58468." evidence="10" ref="3">
    <original>V</original>
    <variation>A</variation>
    <location>
        <position position="121"/>
    </location>
</feature>
<feature type="sequence conflict" description="In Ref. 1; AAC50134." evidence="10" ref="1">
    <original>Y</original>
    <variation>D</variation>
    <location>
        <position position="813"/>
    </location>
</feature>
<feature type="sequence conflict" description="In Ref. 3; AAC51826/AAB58468." evidence="10" ref="3">
    <original>K</original>
    <variation>Q</variation>
    <location>
        <position position="910"/>
    </location>
</feature>
<dbReference type="EMBL" id="U19252">
    <property type="protein sequence ID" value="AAC50134.1"/>
    <property type="status" value="ALT_FRAME"/>
    <property type="molecule type" value="mRNA"/>
</dbReference>
<dbReference type="EMBL" id="AB001523">
    <property type="protein sequence ID" value="BAA21099.1"/>
    <property type="molecule type" value="Genomic_DNA"/>
</dbReference>
<dbReference type="EMBL" id="U61500">
    <property type="protein sequence ID" value="AAC51826.1"/>
    <property type="molecule type" value="mRNA"/>
</dbReference>
<dbReference type="EMBL" id="U61520">
    <property type="protein sequence ID" value="AAB58468.1"/>
    <property type="molecule type" value="Genomic_DNA"/>
</dbReference>
<dbReference type="EMBL" id="U61501">
    <property type="protein sequence ID" value="AAB58468.1"/>
    <property type="status" value="JOINED"/>
    <property type="molecule type" value="Genomic_DNA"/>
</dbReference>
<dbReference type="EMBL" id="U61502">
    <property type="protein sequence ID" value="AAB58468.1"/>
    <property type="status" value="JOINED"/>
    <property type="molecule type" value="Genomic_DNA"/>
</dbReference>
<dbReference type="EMBL" id="U61503">
    <property type="protein sequence ID" value="AAB58468.1"/>
    <property type="status" value="JOINED"/>
    <property type="molecule type" value="Genomic_DNA"/>
</dbReference>
<dbReference type="EMBL" id="U61504">
    <property type="protein sequence ID" value="AAB58468.1"/>
    <property type="status" value="JOINED"/>
    <property type="molecule type" value="Genomic_DNA"/>
</dbReference>
<dbReference type="EMBL" id="U61505">
    <property type="protein sequence ID" value="AAB58468.1"/>
    <property type="status" value="JOINED"/>
    <property type="molecule type" value="Genomic_DNA"/>
</dbReference>
<dbReference type="EMBL" id="U61506">
    <property type="protein sequence ID" value="AAB58468.1"/>
    <property type="status" value="JOINED"/>
    <property type="molecule type" value="Genomic_DNA"/>
</dbReference>
<dbReference type="EMBL" id="U61507">
    <property type="protein sequence ID" value="AAB58468.1"/>
    <property type="status" value="JOINED"/>
    <property type="molecule type" value="Genomic_DNA"/>
</dbReference>
<dbReference type="EMBL" id="U61508">
    <property type="protein sequence ID" value="AAB58468.1"/>
    <property type="status" value="JOINED"/>
    <property type="molecule type" value="Genomic_DNA"/>
</dbReference>
<dbReference type="EMBL" id="U61509">
    <property type="protein sequence ID" value="AAB58468.1"/>
    <property type="status" value="JOINED"/>
    <property type="molecule type" value="Genomic_DNA"/>
</dbReference>
<dbReference type="EMBL" id="U61510">
    <property type="protein sequence ID" value="AAB58468.1"/>
    <property type="status" value="JOINED"/>
    <property type="molecule type" value="Genomic_DNA"/>
</dbReference>
<dbReference type="EMBL" id="U61511">
    <property type="protein sequence ID" value="AAB58468.1"/>
    <property type="status" value="JOINED"/>
    <property type="molecule type" value="Genomic_DNA"/>
</dbReference>
<dbReference type="EMBL" id="U61512">
    <property type="protein sequence ID" value="AAB58468.1"/>
    <property type="status" value="JOINED"/>
    <property type="molecule type" value="Genomic_DNA"/>
</dbReference>
<dbReference type="EMBL" id="U61513">
    <property type="protein sequence ID" value="AAB58468.1"/>
    <property type="status" value="JOINED"/>
    <property type="molecule type" value="Genomic_DNA"/>
</dbReference>
<dbReference type="EMBL" id="U61514">
    <property type="protein sequence ID" value="AAB58468.1"/>
    <property type="status" value="JOINED"/>
    <property type="molecule type" value="Genomic_DNA"/>
</dbReference>
<dbReference type="EMBL" id="U61515">
    <property type="protein sequence ID" value="AAB58468.1"/>
    <property type="status" value="JOINED"/>
    <property type="molecule type" value="Genomic_DNA"/>
</dbReference>
<dbReference type="EMBL" id="U61516">
    <property type="protein sequence ID" value="AAB58468.1"/>
    <property type="status" value="JOINED"/>
    <property type="molecule type" value="Genomic_DNA"/>
</dbReference>
<dbReference type="EMBL" id="U61517">
    <property type="protein sequence ID" value="AAB58468.1"/>
    <property type="status" value="JOINED"/>
    <property type="molecule type" value="Genomic_DNA"/>
</dbReference>
<dbReference type="EMBL" id="U61518">
    <property type="protein sequence ID" value="AAB58468.1"/>
    <property type="status" value="JOINED"/>
    <property type="molecule type" value="Genomic_DNA"/>
</dbReference>
<dbReference type="EMBL" id="U61519">
    <property type="protein sequence ID" value="AAB58468.1"/>
    <property type="status" value="JOINED"/>
    <property type="molecule type" value="Genomic_DNA"/>
</dbReference>
<dbReference type="EMBL" id="AB001517">
    <property type="status" value="NOT_ANNOTATED_CDS"/>
    <property type="molecule type" value="Genomic_DNA"/>
</dbReference>
<dbReference type="EMBL" id="BC046241">
    <property type="protein sequence ID" value="AAH46241.1"/>
    <property type="molecule type" value="mRNA"/>
</dbReference>
<dbReference type="EMBL" id="BC052247">
    <property type="protein sequence ID" value="AAH52247.1"/>
    <property type="molecule type" value="mRNA"/>
</dbReference>
<dbReference type="EMBL" id="BC094823">
    <property type="protein sequence ID" value="AAH94823.1"/>
    <property type="molecule type" value="mRNA"/>
</dbReference>
<dbReference type="EMBL" id="BC101728">
    <property type="protein sequence ID" value="AAI01729.1"/>
    <property type="molecule type" value="mRNA"/>
</dbReference>
<dbReference type="CCDS" id="CCDS13704.1">
    <molecule id="P48553-1"/>
</dbReference>
<dbReference type="PIR" id="JC5523">
    <property type="entry name" value="JC5523"/>
</dbReference>
<dbReference type="RefSeq" id="NP_003265.3">
    <molecule id="P48553-1"/>
    <property type="nucleotide sequence ID" value="NM_003274.4"/>
</dbReference>
<dbReference type="RefSeq" id="XP_016855323.1">
    <property type="nucleotide sequence ID" value="XM_016999834.1"/>
</dbReference>
<dbReference type="BioGRID" id="112964">
    <property type="interactions" value="105"/>
</dbReference>
<dbReference type="ComplexPortal" id="CPX-4749">
    <property type="entry name" value="TRAPP II complex, TRAPPC2 variant"/>
</dbReference>
<dbReference type="ComplexPortal" id="CPX-6902">
    <property type="entry name" value="TRAPP II complex, TRAPPC2B variant"/>
</dbReference>
<dbReference type="CORUM" id="P48553"/>
<dbReference type="DIP" id="DIP-48281N"/>
<dbReference type="FunCoup" id="P48553">
    <property type="interactions" value="2296"/>
</dbReference>
<dbReference type="IntAct" id="P48553">
    <property type="interactions" value="53"/>
</dbReference>
<dbReference type="MINT" id="P48553"/>
<dbReference type="STRING" id="9606.ENSP00000291574"/>
<dbReference type="iPTMnet" id="P48553"/>
<dbReference type="PhosphoSitePlus" id="P48553"/>
<dbReference type="SwissPalm" id="P48553"/>
<dbReference type="BioMuta" id="TRAPPC10"/>
<dbReference type="DMDM" id="12644285"/>
<dbReference type="jPOST" id="P48553"/>
<dbReference type="MassIVE" id="P48553"/>
<dbReference type="PaxDb" id="9606-ENSP00000291574"/>
<dbReference type="PeptideAtlas" id="P48553"/>
<dbReference type="ProteomicsDB" id="55909">
    <molecule id="P48553-1"/>
</dbReference>
<dbReference type="ProteomicsDB" id="69592"/>
<dbReference type="Pumba" id="P48553"/>
<dbReference type="Antibodypedia" id="24094">
    <property type="antibodies" value="143 antibodies from 21 providers"/>
</dbReference>
<dbReference type="DNASU" id="7109"/>
<dbReference type="Ensembl" id="ENST00000291574.9">
    <molecule id="P48553-1"/>
    <property type="protein sequence ID" value="ENSP00000291574.4"/>
    <property type="gene ID" value="ENSG00000160218.13"/>
</dbReference>
<dbReference type="Ensembl" id="ENST00000380221.7">
    <molecule id="P48553-2"/>
    <property type="protein sequence ID" value="ENSP00000369570.3"/>
    <property type="gene ID" value="ENSG00000160218.13"/>
</dbReference>
<dbReference type="GeneID" id="7109"/>
<dbReference type="KEGG" id="hsa:7109"/>
<dbReference type="MANE-Select" id="ENST00000291574.9">
    <property type="protein sequence ID" value="ENSP00000291574.4"/>
    <property type="RefSeq nucleotide sequence ID" value="NM_003274.5"/>
    <property type="RefSeq protein sequence ID" value="NP_003265.3"/>
</dbReference>
<dbReference type="UCSC" id="uc002zdz.4">
    <molecule id="P48553-1"/>
    <property type="organism name" value="human"/>
</dbReference>
<dbReference type="AGR" id="HGNC:11868"/>
<dbReference type="CTD" id="7109"/>
<dbReference type="DisGeNET" id="7109"/>
<dbReference type="GeneCards" id="TRAPPC10"/>
<dbReference type="HGNC" id="HGNC:11868">
    <property type="gene designation" value="TRAPPC10"/>
</dbReference>
<dbReference type="HPA" id="ENSG00000160218">
    <property type="expression patterns" value="Low tissue specificity"/>
</dbReference>
<dbReference type="MalaCards" id="TRAPPC10"/>
<dbReference type="MIM" id="602103">
    <property type="type" value="gene"/>
</dbReference>
<dbReference type="MIM" id="620027">
    <property type="type" value="phenotype"/>
</dbReference>
<dbReference type="neXtProt" id="NX_P48553"/>
<dbReference type="OpenTargets" id="ENSG00000160218"/>
<dbReference type="Orphanet" id="2512">
    <property type="disease" value="Autosomal recessive primary microcephaly"/>
</dbReference>
<dbReference type="PharmGKB" id="PA162406870"/>
<dbReference type="VEuPathDB" id="HostDB:ENSG00000160218"/>
<dbReference type="eggNOG" id="KOG1931">
    <property type="taxonomic scope" value="Eukaryota"/>
</dbReference>
<dbReference type="GeneTree" id="ENSGT00390000003873"/>
<dbReference type="HOGENOM" id="CLU_006893_0_0_1"/>
<dbReference type="InParanoid" id="P48553"/>
<dbReference type="OMA" id="TKVHENP"/>
<dbReference type="OrthoDB" id="10256906at2759"/>
<dbReference type="PAN-GO" id="P48553">
    <property type="GO annotations" value="3 GO annotations based on evolutionary models"/>
</dbReference>
<dbReference type="PhylomeDB" id="P48553"/>
<dbReference type="TreeFam" id="TF320954"/>
<dbReference type="PathwayCommons" id="P48553"/>
<dbReference type="Reactome" id="R-HSA-204005">
    <property type="pathway name" value="COPII-mediated vesicle transport"/>
</dbReference>
<dbReference type="Reactome" id="R-HSA-8876198">
    <property type="pathway name" value="RAB GEFs exchange GTP for GDP on RABs"/>
</dbReference>
<dbReference type="SignaLink" id="P48553"/>
<dbReference type="BioGRID-ORCS" id="7109">
    <property type="hits" value="19 hits in 1151 CRISPR screens"/>
</dbReference>
<dbReference type="ChiTaRS" id="TRAPPC10">
    <property type="organism name" value="human"/>
</dbReference>
<dbReference type="GeneWiki" id="TMEM1"/>
<dbReference type="GenomeRNAi" id="7109"/>
<dbReference type="Pharos" id="P48553">
    <property type="development level" value="Tbio"/>
</dbReference>
<dbReference type="PRO" id="PR:P48553"/>
<dbReference type="Proteomes" id="UP000005640">
    <property type="component" value="Chromosome 21"/>
</dbReference>
<dbReference type="RNAct" id="P48553">
    <property type="molecule type" value="protein"/>
</dbReference>
<dbReference type="Bgee" id="ENSG00000160218">
    <property type="expression patterns" value="Expressed in bone marrow cell and 125 other cell types or tissues"/>
</dbReference>
<dbReference type="ExpressionAtlas" id="P48553">
    <property type="expression patterns" value="baseline and differential"/>
</dbReference>
<dbReference type="GO" id="GO:0005737">
    <property type="term" value="C:cytoplasm"/>
    <property type="evidence" value="ECO:0000303"/>
    <property type="project" value="ComplexPortal"/>
</dbReference>
<dbReference type="GO" id="GO:0005829">
    <property type="term" value="C:cytosol"/>
    <property type="evidence" value="ECO:0000304"/>
    <property type="project" value="Reactome"/>
</dbReference>
<dbReference type="GO" id="GO:0030008">
    <property type="term" value="C:TRAPP complex"/>
    <property type="evidence" value="ECO:0000314"/>
    <property type="project" value="UniProtKB"/>
</dbReference>
<dbReference type="GO" id="GO:1990071">
    <property type="term" value="C:TRAPPII protein complex"/>
    <property type="evidence" value="ECO:0000318"/>
    <property type="project" value="GO_Central"/>
</dbReference>
<dbReference type="GO" id="GO:0034498">
    <property type="term" value="P:early endosome to Golgi transport"/>
    <property type="evidence" value="ECO:0000318"/>
    <property type="project" value="GO_Central"/>
</dbReference>
<dbReference type="GO" id="GO:0006888">
    <property type="term" value="P:endoplasmic reticulum to Golgi vesicle-mediated transport"/>
    <property type="evidence" value="ECO:0000303"/>
    <property type="project" value="ComplexPortal"/>
</dbReference>
<dbReference type="GO" id="GO:0006891">
    <property type="term" value="P:intra-Golgi vesicle-mediated transport"/>
    <property type="evidence" value="ECO:0000315"/>
    <property type="project" value="UniProtKB"/>
</dbReference>
<dbReference type="GO" id="GO:0006901">
    <property type="term" value="P:vesicle coating"/>
    <property type="evidence" value="ECO:0000303"/>
    <property type="project" value="ComplexPortal"/>
</dbReference>
<dbReference type="GO" id="GO:0099022">
    <property type="term" value="P:vesicle tethering"/>
    <property type="evidence" value="ECO:0000303"/>
    <property type="project" value="ComplexPortal"/>
</dbReference>
<dbReference type="InterPro" id="IPR056917">
    <property type="entry name" value="Ig_TRAPPC10"/>
</dbReference>
<dbReference type="InterPro" id="IPR022233">
    <property type="entry name" value="TRAPP_II_complex_TRAPPC10_C"/>
</dbReference>
<dbReference type="InterPro" id="IPR045126">
    <property type="entry name" value="TRAPPC10/Trs130"/>
</dbReference>
<dbReference type="InterPro" id="IPR056913">
    <property type="entry name" value="TRAPPC10/Trs130_N"/>
</dbReference>
<dbReference type="PANTHER" id="PTHR13251">
    <property type="entry name" value="EPILEPSY HOLOPROSENCEPHALY CANDIDATE 1/TMEM1"/>
    <property type="match status" value="1"/>
</dbReference>
<dbReference type="PANTHER" id="PTHR13251:SF3">
    <property type="entry name" value="TRAFFICKING PROTEIN PARTICLE COMPLEX SUBUNIT 10"/>
    <property type="match status" value="1"/>
</dbReference>
<dbReference type="Pfam" id="PF23604">
    <property type="entry name" value="Ig_TRAPPC10"/>
    <property type="match status" value="1"/>
</dbReference>
<dbReference type="Pfam" id="PF12584">
    <property type="entry name" value="TRAPPC10"/>
    <property type="match status" value="1"/>
</dbReference>
<dbReference type="Pfam" id="PF23036">
    <property type="entry name" value="TRAPPC10_1st"/>
    <property type="match status" value="1"/>
</dbReference>
<organism>
    <name type="scientific">Homo sapiens</name>
    <name type="common">Human</name>
    <dbReference type="NCBI Taxonomy" id="9606"/>
    <lineage>
        <taxon>Eukaryota</taxon>
        <taxon>Metazoa</taxon>
        <taxon>Chordata</taxon>
        <taxon>Craniata</taxon>
        <taxon>Vertebrata</taxon>
        <taxon>Euteleostomi</taxon>
        <taxon>Mammalia</taxon>
        <taxon>Eutheria</taxon>
        <taxon>Euarchontoglires</taxon>
        <taxon>Primates</taxon>
        <taxon>Haplorrhini</taxon>
        <taxon>Catarrhini</taxon>
        <taxon>Hominidae</taxon>
        <taxon>Homo</taxon>
    </lineage>
</organism>
<evidence type="ECO:0000250" key="1"/>
<evidence type="ECO:0000256" key="2">
    <source>
        <dbReference type="SAM" id="MobiDB-lite"/>
    </source>
</evidence>
<evidence type="ECO:0000269" key="3">
    <source>
    </source>
</evidence>
<evidence type="ECO:0000269" key="4">
    <source>
    </source>
</evidence>
<evidence type="ECO:0000269" key="5">
    <source>
    </source>
</evidence>
<evidence type="ECO:0000269" key="6">
    <source>
    </source>
</evidence>
<evidence type="ECO:0000269" key="7">
    <source>
    </source>
</evidence>
<evidence type="ECO:0000269" key="8">
    <source>
    </source>
</evidence>
<evidence type="ECO:0000303" key="9">
    <source>
    </source>
</evidence>
<evidence type="ECO:0000305" key="10"/>
<evidence type="ECO:0007744" key="11">
    <source>
    </source>
</evidence>
<proteinExistence type="evidence at protein level"/>
<accession>P48553</accession>
<accession>Q3MIR2</accession>
<accession>Q86SI7</accession>
<accession>Q9UMD4</accession>
<accession>Q9Y4L3</accession>
<name>TPC10_HUMAN</name>